<comment type="catalytic activity">
    <reaction evidence="1">
        <text>CMP + ATP = CDP + ADP</text>
        <dbReference type="Rhea" id="RHEA:11600"/>
        <dbReference type="ChEBI" id="CHEBI:30616"/>
        <dbReference type="ChEBI" id="CHEBI:58069"/>
        <dbReference type="ChEBI" id="CHEBI:60377"/>
        <dbReference type="ChEBI" id="CHEBI:456216"/>
        <dbReference type="EC" id="2.7.4.25"/>
    </reaction>
</comment>
<comment type="catalytic activity">
    <reaction evidence="1">
        <text>dCMP + ATP = dCDP + ADP</text>
        <dbReference type="Rhea" id="RHEA:25094"/>
        <dbReference type="ChEBI" id="CHEBI:30616"/>
        <dbReference type="ChEBI" id="CHEBI:57566"/>
        <dbReference type="ChEBI" id="CHEBI:58593"/>
        <dbReference type="ChEBI" id="CHEBI:456216"/>
        <dbReference type="EC" id="2.7.4.25"/>
    </reaction>
</comment>
<comment type="subcellular location">
    <subcellularLocation>
        <location evidence="1">Cytoplasm</location>
    </subcellularLocation>
</comment>
<comment type="similarity">
    <text evidence="1">Belongs to the cytidylate kinase family. Type 1 subfamily.</text>
</comment>
<accession>Q02XH5</accession>
<proteinExistence type="inferred from homology"/>
<keyword id="KW-0067">ATP-binding</keyword>
<keyword id="KW-0963">Cytoplasm</keyword>
<keyword id="KW-0418">Kinase</keyword>
<keyword id="KW-0547">Nucleotide-binding</keyword>
<keyword id="KW-0808">Transferase</keyword>
<dbReference type="EC" id="2.7.4.25" evidence="1"/>
<dbReference type="EMBL" id="CP000425">
    <property type="protein sequence ID" value="ABJ73347.1"/>
    <property type="molecule type" value="Genomic_DNA"/>
</dbReference>
<dbReference type="RefSeq" id="WP_011676696.1">
    <property type="nucleotide sequence ID" value="NC_008527.1"/>
</dbReference>
<dbReference type="SMR" id="Q02XH5"/>
<dbReference type="KEGG" id="llc:LACR_1860"/>
<dbReference type="HOGENOM" id="CLU_079959_0_2_9"/>
<dbReference type="Proteomes" id="UP000000240">
    <property type="component" value="Chromosome"/>
</dbReference>
<dbReference type="GO" id="GO:0005737">
    <property type="term" value="C:cytoplasm"/>
    <property type="evidence" value="ECO:0007669"/>
    <property type="project" value="UniProtKB-SubCell"/>
</dbReference>
<dbReference type="GO" id="GO:0005524">
    <property type="term" value="F:ATP binding"/>
    <property type="evidence" value="ECO:0007669"/>
    <property type="project" value="UniProtKB-UniRule"/>
</dbReference>
<dbReference type="GO" id="GO:0036430">
    <property type="term" value="F:CMP kinase activity"/>
    <property type="evidence" value="ECO:0007669"/>
    <property type="project" value="RHEA"/>
</dbReference>
<dbReference type="GO" id="GO:0036431">
    <property type="term" value="F:dCMP kinase activity"/>
    <property type="evidence" value="ECO:0007669"/>
    <property type="project" value="RHEA"/>
</dbReference>
<dbReference type="GO" id="GO:0006220">
    <property type="term" value="P:pyrimidine nucleotide metabolic process"/>
    <property type="evidence" value="ECO:0007669"/>
    <property type="project" value="UniProtKB-UniRule"/>
</dbReference>
<dbReference type="CDD" id="cd02020">
    <property type="entry name" value="CMPK"/>
    <property type="match status" value="1"/>
</dbReference>
<dbReference type="Gene3D" id="3.40.50.300">
    <property type="entry name" value="P-loop containing nucleotide triphosphate hydrolases"/>
    <property type="match status" value="1"/>
</dbReference>
<dbReference type="HAMAP" id="MF_00238">
    <property type="entry name" value="Cytidyl_kinase_type1"/>
    <property type="match status" value="1"/>
</dbReference>
<dbReference type="InterPro" id="IPR003136">
    <property type="entry name" value="Cytidylate_kin"/>
</dbReference>
<dbReference type="InterPro" id="IPR011994">
    <property type="entry name" value="Cytidylate_kinase_dom"/>
</dbReference>
<dbReference type="InterPro" id="IPR027417">
    <property type="entry name" value="P-loop_NTPase"/>
</dbReference>
<dbReference type="NCBIfam" id="TIGR00017">
    <property type="entry name" value="cmk"/>
    <property type="match status" value="1"/>
</dbReference>
<dbReference type="Pfam" id="PF02224">
    <property type="entry name" value="Cytidylate_kin"/>
    <property type="match status" value="1"/>
</dbReference>
<dbReference type="SUPFAM" id="SSF52540">
    <property type="entry name" value="P-loop containing nucleoside triphosphate hydrolases"/>
    <property type="match status" value="1"/>
</dbReference>
<organism>
    <name type="scientific">Lactococcus lactis subsp. cremoris (strain SK11)</name>
    <dbReference type="NCBI Taxonomy" id="272622"/>
    <lineage>
        <taxon>Bacteria</taxon>
        <taxon>Bacillati</taxon>
        <taxon>Bacillota</taxon>
        <taxon>Bacilli</taxon>
        <taxon>Lactobacillales</taxon>
        <taxon>Streptococcaceae</taxon>
        <taxon>Lactococcus</taxon>
        <taxon>Lactococcus cremoris subsp. cremoris</taxon>
    </lineage>
</organism>
<feature type="chain" id="PRO_1000048227" description="Cytidylate kinase">
    <location>
        <begin position="1"/>
        <end position="220"/>
    </location>
</feature>
<feature type="binding site" evidence="1">
    <location>
        <begin position="10"/>
        <end position="18"/>
    </location>
    <ligand>
        <name>ATP</name>
        <dbReference type="ChEBI" id="CHEBI:30616"/>
    </ligand>
</feature>
<name>KCY_LACLS</name>
<protein>
    <recommendedName>
        <fullName evidence="1">Cytidylate kinase</fullName>
        <shortName evidence="1">CK</shortName>
        <ecNumber evidence="1">2.7.4.25</ecNumber>
    </recommendedName>
    <alternativeName>
        <fullName evidence="1">Cytidine monophosphate kinase</fullName>
        <shortName evidence="1">CMP kinase</shortName>
    </alternativeName>
</protein>
<sequence length="220" mass="24346">MKKIQIAIDGPASSGKSTVAKIIARNLGLIYLDTGAMYRVATLVALQEKTEDASKIIQFIENHPISFANGKNGQEVLVGLDNVTEVIRTNEVTNAVSKISAMVEIREFMVAEQQRIAQKGGIIMDGRDIGTVVLPQANLKIFLVASVDERAERRYKENLSKGIPTDLERLKVEIAERDRKDSIRVVSPLKQAEDAILLDSTGKTIKEIVQFIEEKAKKLM</sequence>
<evidence type="ECO:0000255" key="1">
    <source>
        <dbReference type="HAMAP-Rule" id="MF_00238"/>
    </source>
</evidence>
<reference key="1">
    <citation type="journal article" date="2006" name="Proc. Natl. Acad. Sci. U.S.A.">
        <title>Comparative genomics of the lactic acid bacteria.</title>
        <authorList>
            <person name="Makarova K.S."/>
            <person name="Slesarev A."/>
            <person name="Wolf Y.I."/>
            <person name="Sorokin A."/>
            <person name="Mirkin B."/>
            <person name="Koonin E.V."/>
            <person name="Pavlov A."/>
            <person name="Pavlova N."/>
            <person name="Karamychev V."/>
            <person name="Polouchine N."/>
            <person name="Shakhova V."/>
            <person name="Grigoriev I."/>
            <person name="Lou Y."/>
            <person name="Rohksar D."/>
            <person name="Lucas S."/>
            <person name="Huang K."/>
            <person name="Goodstein D.M."/>
            <person name="Hawkins T."/>
            <person name="Plengvidhya V."/>
            <person name="Welker D."/>
            <person name="Hughes J."/>
            <person name="Goh Y."/>
            <person name="Benson A."/>
            <person name="Baldwin K."/>
            <person name="Lee J.-H."/>
            <person name="Diaz-Muniz I."/>
            <person name="Dosti B."/>
            <person name="Smeianov V."/>
            <person name="Wechter W."/>
            <person name="Barabote R."/>
            <person name="Lorca G."/>
            <person name="Altermann E."/>
            <person name="Barrangou R."/>
            <person name="Ganesan B."/>
            <person name="Xie Y."/>
            <person name="Rawsthorne H."/>
            <person name="Tamir D."/>
            <person name="Parker C."/>
            <person name="Breidt F."/>
            <person name="Broadbent J.R."/>
            <person name="Hutkins R."/>
            <person name="O'Sullivan D."/>
            <person name="Steele J."/>
            <person name="Unlu G."/>
            <person name="Saier M.H. Jr."/>
            <person name="Klaenhammer T."/>
            <person name="Richardson P."/>
            <person name="Kozyavkin S."/>
            <person name="Weimer B.C."/>
            <person name="Mills D.A."/>
        </authorList>
    </citation>
    <scope>NUCLEOTIDE SEQUENCE [LARGE SCALE GENOMIC DNA]</scope>
    <source>
        <strain>SK11</strain>
    </source>
</reference>
<gene>
    <name evidence="1" type="primary">cmk</name>
    <name type="ordered locus">LACR_1860</name>
</gene>